<reference key="1">
    <citation type="submission" date="2007-07" db="EMBL/GenBank/DDBJ databases">
        <title>Complete genome sequence of Campylobacter hominis ATCC BAA-381, a commensal isolated from the human gastrointestinal tract.</title>
        <authorList>
            <person name="Fouts D.E."/>
            <person name="Mongodin E.F."/>
            <person name="Puiu D."/>
            <person name="Sebastian Y."/>
            <person name="Miller W.G."/>
            <person name="Mandrell R.E."/>
            <person name="Nelson K.E."/>
        </authorList>
    </citation>
    <scope>NUCLEOTIDE SEQUENCE [LARGE SCALE GENOMIC DNA]</scope>
    <source>
        <strain>ATCC BAA-381 / DSM 21671 / CCUG 45161 / LMG 19568 / NCTC 13146 / CH001A</strain>
    </source>
</reference>
<feature type="chain" id="PRO_1000005482" description="Large ribosomal subunit protein uL10">
    <location>
        <begin position="1"/>
        <end position="157"/>
    </location>
</feature>
<keyword id="KW-1185">Reference proteome</keyword>
<keyword id="KW-0687">Ribonucleoprotein</keyword>
<keyword id="KW-0689">Ribosomal protein</keyword>
<keyword id="KW-0694">RNA-binding</keyword>
<keyword id="KW-0699">rRNA-binding</keyword>
<protein>
    <recommendedName>
        <fullName evidence="1">Large ribosomal subunit protein uL10</fullName>
    </recommendedName>
    <alternativeName>
        <fullName evidence="2">50S ribosomal protein L10</fullName>
    </alternativeName>
</protein>
<organism>
    <name type="scientific">Campylobacter hominis (strain ATCC BAA-381 / DSM 21671 / CCUG 45161 / LMG 19568 / NCTC 13146 / CH001A)</name>
    <dbReference type="NCBI Taxonomy" id="360107"/>
    <lineage>
        <taxon>Bacteria</taxon>
        <taxon>Pseudomonadati</taxon>
        <taxon>Campylobacterota</taxon>
        <taxon>Epsilonproteobacteria</taxon>
        <taxon>Campylobacterales</taxon>
        <taxon>Campylobacteraceae</taxon>
        <taxon>Campylobacter</taxon>
    </lineage>
</organism>
<comment type="function">
    <text evidence="1">Forms part of the ribosomal stalk, playing a central role in the interaction of the ribosome with GTP-bound translation factors.</text>
</comment>
<comment type="subunit">
    <text evidence="1">Part of the ribosomal stalk of the 50S ribosomal subunit. The N-terminus interacts with L11 and the large rRNA to form the base of the stalk. The C-terminus forms an elongated spine to which L12 dimers bind in a sequential fashion forming a multimeric L10(L12)X complex.</text>
</comment>
<comment type="similarity">
    <text evidence="1">Belongs to the universal ribosomal protein uL10 family.</text>
</comment>
<proteinExistence type="inferred from homology"/>
<sequence>MTRDEKAKIVAELTDGFKNSEAVLVSDFKGLSVKALENLRNNAREVDVKVQVVKNTLANIALKNASKDGMELKDTNIFLWGNQIDVCKVAAKFEEQNESFKIKTAYMDGEVASLSKIVALSKLPSRDELIAMLLQVWNAPIQNFTIGLNALKEKKSA</sequence>
<dbReference type="EMBL" id="CP000776">
    <property type="protein sequence ID" value="ABS51734.1"/>
    <property type="molecule type" value="Genomic_DNA"/>
</dbReference>
<dbReference type="RefSeq" id="WP_012109488.1">
    <property type="nucleotide sequence ID" value="NC_009714.1"/>
</dbReference>
<dbReference type="SMR" id="A7I3U1"/>
<dbReference type="STRING" id="360107.CHAB381_1665"/>
<dbReference type="KEGG" id="cha:CHAB381_1665"/>
<dbReference type="eggNOG" id="COG0244">
    <property type="taxonomic scope" value="Bacteria"/>
</dbReference>
<dbReference type="HOGENOM" id="CLU_092227_2_2_7"/>
<dbReference type="OrthoDB" id="3186107at2"/>
<dbReference type="Proteomes" id="UP000002407">
    <property type="component" value="Chromosome"/>
</dbReference>
<dbReference type="GO" id="GO:0015934">
    <property type="term" value="C:large ribosomal subunit"/>
    <property type="evidence" value="ECO:0007669"/>
    <property type="project" value="InterPro"/>
</dbReference>
<dbReference type="GO" id="GO:0070180">
    <property type="term" value="F:large ribosomal subunit rRNA binding"/>
    <property type="evidence" value="ECO:0007669"/>
    <property type="project" value="UniProtKB-UniRule"/>
</dbReference>
<dbReference type="GO" id="GO:0003735">
    <property type="term" value="F:structural constituent of ribosome"/>
    <property type="evidence" value="ECO:0007669"/>
    <property type="project" value="InterPro"/>
</dbReference>
<dbReference type="GO" id="GO:0006412">
    <property type="term" value="P:translation"/>
    <property type="evidence" value="ECO:0007669"/>
    <property type="project" value="UniProtKB-UniRule"/>
</dbReference>
<dbReference type="CDD" id="cd05797">
    <property type="entry name" value="Ribosomal_L10"/>
    <property type="match status" value="1"/>
</dbReference>
<dbReference type="Gene3D" id="3.30.70.1730">
    <property type="match status" value="1"/>
</dbReference>
<dbReference type="Gene3D" id="6.10.250.290">
    <property type="match status" value="1"/>
</dbReference>
<dbReference type="HAMAP" id="MF_00362">
    <property type="entry name" value="Ribosomal_uL10"/>
    <property type="match status" value="1"/>
</dbReference>
<dbReference type="InterPro" id="IPR001790">
    <property type="entry name" value="Ribosomal_uL10"/>
</dbReference>
<dbReference type="InterPro" id="IPR043141">
    <property type="entry name" value="Ribosomal_uL10-like_sf"/>
</dbReference>
<dbReference type="InterPro" id="IPR022973">
    <property type="entry name" value="Ribosomal_uL10_bac"/>
</dbReference>
<dbReference type="InterPro" id="IPR047865">
    <property type="entry name" value="Ribosomal_uL10_bac_type"/>
</dbReference>
<dbReference type="InterPro" id="IPR002363">
    <property type="entry name" value="Ribosomal_uL10_CS_bac"/>
</dbReference>
<dbReference type="NCBIfam" id="NF000955">
    <property type="entry name" value="PRK00099.1-1"/>
    <property type="match status" value="1"/>
</dbReference>
<dbReference type="PANTHER" id="PTHR11560">
    <property type="entry name" value="39S RIBOSOMAL PROTEIN L10, MITOCHONDRIAL"/>
    <property type="match status" value="1"/>
</dbReference>
<dbReference type="Pfam" id="PF00466">
    <property type="entry name" value="Ribosomal_L10"/>
    <property type="match status" value="1"/>
</dbReference>
<dbReference type="SUPFAM" id="SSF160369">
    <property type="entry name" value="Ribosomal protein L10-like"/>
    <property type="match status" value="1"/>
</dbReference>
<dbReference type="PROSITE" id="PS01109">
    <property type="entry name" value="RIBOSOMAL_L10"/>
    <property type="match status" value="1"/>
</dbReference>
<name>RL10_CAMHC</name>
<evidence type="ECO:0000255" key="1">
    <source>
        <dbReference type="HAMAP-Rule" id="MF_00362"/>
    </source>
</evidence>
<evidence type="ECO:0000305" key="2"/>
<accession>A7I3U1</accession>
<gene>
    <name evidence="1" type="primary">rplJ</name>
    <name type="ordered locus">CHAB381_1665</name>
</gene>